<keyword id="KW-0963">Cytoplasm</keyword>
<keyword id="KW-0448">Lipopolysaccharide biosynthesis</keyword>
<keyword id="KW-0548">Nucleotidyltransferase</keyword>
<keyword id="KW-1185">Reference proteome</keyword>
<keyword id="KW-0808">Transferase</keyword>
<proteinExistence type="inferred from homology"/>
<evidence type="ECO:0000255" key="1">
    <source>
        <dbReference type="HAMAP-Rule" id="MF_00057"/>
    </source>
</evidence>
<name>KDSB_METFK</name>
<dbReference type="EC" id="2.7.7.38" evidence="1"/>
<dbReference type="EMBL" id="CP000284">
    <property type="protein sequence ID" value="ABE50354.1"/>
    <property type="molecule type" value="Genomic_DNA"/>
</dbReference>
<dbReference type="RefSeq" id="WP_011480308.1">
    <property type="nucleotide sequence ID" value="NC_007947.1"/>
</dbReference>
<dbReference type="SMR" id="Q1GZI3"/>
<dbReference type="STRING" id="265072.Mfla_2087"/>
<dbReference type="KEGG" id="mfa:Mfla_2087"/>
<dbReference type="eggNOG" id="COG1212">
    <property type="taxonomic scope" value="Bacteria"/>
</dbReference>
<dbReference type="HOGENOM" id="CLU_065038_1_0_4"/>
<dbReference type="OrthoDB" id="9815559at2"/>
<dbReference type="UniPathway" id="UPA00030"/>
<dbReference type="UniPathway" id="UPA00358">
    <property type="reaction ID" value="UER00476"/>
</dbReference>
<dbReference type="Proteomes" id="UP000002440">
    <property type="component" value="Chromosome"/>
</dbReference>
<dbReference type="GO" id="GO:0005829">
    <property type="term" value="C:cytosol"/>
    <property type="evidence" value="ECO:0007669"/>
    <property type="project" value="TreeGrafter"/>
</dbReference>
<dbReference type="GO" id="GO:0008690">
    <property type="term" value="F:3-deoxy-manno-octulosonate cytidylyltransferase activity"/>
    <property type="evidence" value="ECO:0007669"/>
    <property type="project" value="UniProtKB-UniRule"/>
</dbReference>
<dbReference type="GO" id="GO:0033468">
    <property type="term" value="P:CMP-keto-3-deoxy-D-manno-octulosonic acid biosynthetic process"/>
    <property type="evidence" value="ECO:0007669"/>
    <property type="project" value="UniProtKB-UniRule"/>
</dbReference>
<dbReference type="GO" id="GO:0009103">
    <property type="term" value="P:lipopolysaccharide biosynthetic process"/>
    <property type="evidence" value="ECO:0007669"/>
    <property type="project" value="UniProtKB-UniRule"/>
</dbReference>
<dbReference type="CDD" id="cd02517">
    <property type="entry name" value="CMP-KDO-Synthetase"/>
    <property type="match status" value="1"/>
</dbReference>
<dbReference type="FunFam" id="3.90.550.10:FF:000011">
    <property type="entry name" value="3-deoxy-manno-octulosonate cytidylyltransferase"/>
    <property type="match status" value="1"/>
</dbReference>
<dbReference type="Gene3D" id="3.90.550.10">
    <property type="entry name" value="Spore Coat Polysaccharide Biosynthesis Protein SpsA, Chain A"/>
    <property type="match status" value="1"/>
</dbReference>
<dbReference type="HAMAP" id="MF_00057">
    <property type="entry name" value="KdsB"/>
    <property type="match status" value="1"/>
</dbReference>
<dbReference type="InterPro" id="IPR003329">
    <property type="entry name" value="Cytidylyl_trans"/>
</dbReference>
<dbReference type="InterPro" id="IPR004528">
    <property type="entry name" value="KdsB"/>
</dbReference>
<dbReference type="InterPro" id="IPR029044">
    <property type="entry name" value="Nucleotide-diphossugar_trans"/>
</dbReference>
<dbReference type="NCBIfam" id="TIGR00466">
    <property type="entry name" value="kdsB"/>
    <property type="match status" value="1"/>
</dbReference>
<dbReference type="NCBIfam" id="NF003950">
    <property type="entry name" value="PRK05450.1-3"/>
    <property type="match status" value="1"/>
</dbReference>
<dbReference type="NCBIfam" id="NF003952">
    <property type="entry name" value="PRK05450.1-5"/>
    <property type="match status" value="1"/>
</dbReference>
<dbReference type="NCBIfam" id="NF009905">
    <property type="entry name" value="PRK13368.1"/>
    <property type="match status" value="1"/>
</dbReference>
<dbReference type="PANTHER" id="PTHR42866">
    <property type="entry name" value="3-DEOXY-MANNO-OCTULOSONATE CYTIDYLYLTRANSFERASE"/>
    <property type="match status" value="1"/>
</dbReference>
<dbReference type="PANTHER" id="PTHR42866:SF2">
    <property type="entry name" value="3-DEOXY-MANNO-OCTULOSONATE CYTIDYLYLTRANSFERASE, MITOCHONDRIAL"/>
    <property type="match status" value="1"/>
</dbReference>
<dbReference type="Pfam" id="PF02348">
    <property type="entry name" value="CTP_transf_3"/>
    <property type="match status" value="1"/>
</dbReference>
<dbReference type="SUPFAM" id="SSF53448">
    <property type="entry name" value="Nucleotide-diphospho-sugar transferases"/>
    <property type="match status" value="1"/>
</dbReference>
<comment type="function">
    <text evidence="1">Activates KDO (a required 8-carbon sugar) for incorporation into bacterial lipopolysaccharide in Gram-negative bacteria.</text>
</comment>
<comment type="catalytic activity">
    <reaction evidence="1">
        <text>3-deoxy-alpha-D-manno-oct-2-ulosonate + CTP = CMP-3-deoxy-beta-D-manno-octulosonate + diphosphate</text>
        <dbReference type="Rhea" id="RHEA:23448"/>
        <dbReference type="ChEBI" id="CHEBI:33019"/>
        <dbReference type="ChEBI" id="CHEBI:37563"/>
        <dbReference type="ChEBI" id="CHEBI:85986"/>
        <dbReference type="ChEBI" id="CHEBI:85987"/>
        <dbReference type="EC" id="2.7.7.38"/>
    </reaction>
</comment>
<comment type="pathway">
    <text evidence="1">Nucleotide-sugar biosynthesis; CMP-3-deoxy-D-manno-octulosonate biosynthesis; CMP-3-deoxy-D-manno-octulosonate from 3-deoxy-D-manno-octulosonate and CTP: step 1/1.</text>
</comment>
<comment type="pathway">
    <text evidence="1">Bacterial outer membrane biogenesis; lipopolysaccharide biosynthesis.</text>
</comment>
<comment type="subcellular location">
    <subcellularLocation>
        <location evidence="1">Cytoplasm</location>
    </subcellularLocation>
</comment>
<comment type="similarity">
    <text evidence="1">Belongs to the KdsB family.</text>
</comment>
<accession>Q1GZI3</accession>
<feature type="chain" id="PRO_1000003369" description="3-deoxy-manno-octulosonate cytidylyltransferase">
    <location>
        <begin position="1"/>
        <end position="257"/>
    </location>
</feature>
<sequence length="257" mass="27970">MSFKVVIPARYASSRLPGKPLLDIAGKPMVVRVIERSLASGAAEVVVATDHERIQEAVSSYGYDVMMTSADHASGTDRIAEVVQQRGWEDDTIVVNVQGDEPLIDPRLIGEVAGNLSAHAEASMATACHVLHDTPSILNPNIVKVVLDQQGHALYFSRAPIPYPRDAFAANQDIPPGMPIYRHIGIYAYRAGFLRAYAALTPSAIEYFESLEQLRVLWHGYKISVEITEKAPASGVDTEADLAYVRSVVISGESKLL</sequence>
<gene>
    <name evidence="1" type="primary">kdsB</name>
    <name type="ordered locus">Mfla_2087</name>
</gene>
<protein>
    <recommendedName>
        <fullName evidence="1">3-deoxy-manno-octulosonate cytidylyltransferase</fullName>
        <ecNumber evidence="1">2.7.7.38</ecNumber>
    </recommendedName>
    <alternativeName>
        <fullName evidence="1">CMP-2-keto-3-deoxyoctulosonic acid synthase</fullName>
        <shortName evidence="1">CKS</shortName>
        <shortName evidence="1">CMP-KDO synthase</shortName>
    </alternativeName>
</protein>
<reference key="1">
    <citation type="submission" date="2006-03" db="EMBL/GenBank/DDBJ databases">
        <title>Complete sequence of Methylobacillus flagellatus KT.</title>
        <authorList>
            <consortium name="US DOE Joint Genome Institute"/>
            <person name="Copeland A."/>
            <person name="Lucas S."/>
            <person name="Lapidus A."/>
            <person name="Barry K."/>
            <person name="Detter J.C."/>
            <person name="Glavina del Rio T."/>
            <person name="Hammon N."/>
            <person name="Israni S."/>
            <person name="Dalin E."/>
            <person name="Tice H."/>
            <person name="Pitluck S."/>
            <person name="Brettin T."/>
            <person name="Bruce D."/>
            <person name="Han C."/>
            <person name="Tapia R."/>
            <person name="Saunders E."/>
            <person name="Gilna P."/>
            <person name="Schmutz J."/>
            <person name="Larimer F."/>
            <person name="Land M."/>
            <person name="Kyrpides N."/>
            <person name="Anderson I."/>
            <person name="Richardson P."/>
        </authorList>
    </citation>
    <scope>NUCLEOTIDE SEQUENCE [LARGE SCALE GENOMIC DNA]</scope>
    <source>
        <strain>ATCC 51484 / DSM 6875 / VKM B-1610 / KT</strain>
    </source>
</reference>
<organism>
    <name type="scientific">Methylobacillus flagellatus (strain ATCC 51484 / DSM 6875 / VKM B-1610 / KT)</name>
    <dbReference type="NCBI Taxonomy" id="265072"/>
    <lineage>
        <taxon>Bacteria</taxon>
        <taxon>Pseudomonadati</taxon>
        <taxon>Pseudomonadota</taxon>
        <taxon>Betaproteobacteria</taxon>
        <taxon>Nitrosomonadales</taxon>
        <taxon>Methylophilaceae</taxon>
        <taxon>Methylobacillus</taxon>
    </lineage>
</organism>